<dbReference type="EC" id="2.7.1.23" evidence="1"/>
<dbReference type="EMBL" id="CP001401">
    <property type="protein sequence ID" value="ACP54064.1"/>
    <property type="molecule type" value="Genomic_DNA"/>
</dbReference>
<dbReference type="RefSeq" id="WP_012710214.1">
    <property type="nucleotide sequence ID" value="NC_012632.1"/>
</dbReference>
<dbReference type="SMR" id="C3MZX9"/>
<dbReference type="KEGG" id="sim:M1627_0035"/>
<dbReference type="HOGENOM" id="CLU_008831_0_3_2"/>
<dbReference type="Proteomes" id="UP000002307">
    <property type="component" value="Chromosome"/>
</dbReference>
<dbReference type="GO" id="GO:0005737">
    <property type="term" value="C:cytoplasm"/>
    <property type="evidence" value="ECO:0007669"/>
    <property type="project" value="UniProtKB-SubCell"/>
</dbReference>
<dbReference type="GO" id="GO:0005524">
    <property type="term" value="F:ATP binding"/>
    <property type="evidence" value="ECO:0007669"/>
    <property type="project" value="UniProtKB-KW"/>
</dbReference>
<dbReference type="GO" id="GO:0046872">
    <property type="term" value="F:metal ion binding"/>
    <property type="evidence" value="ECO:0007669"/>
    <property type="project" value="UniProtKB-UniRule"/>
</dbReference>
<dbReference type="GO" id="GO:0003951">
    <property type="term" value="F:NAD+ kinase activity"/>
    <property type="evidence" value="ECO:0007669"/>
    <property type="project" value="UniProtKB-UniRule"/>
</dbReference>
<dbReference type="GO" id="GO:0019674">
    <property type="term" value="P:NAD metabolic process"/>
    <property type="evidence" value="ECO:0007669"/>
    <property type="project" value="InterPro"/>
</dbReference>
<dbReference type="GO" id="GO:0006741">
    <property type="term" value="P:NADP biosynthetic process"/>
    <property type="evidence" value="ECO:0007669"/>
    <property type="project" value="UniProtKB-UniRule"/>
</dbReference>
<dbReference type="Gene3D" id="3.40.50.10330">
    <property type="entry name" value="Probable inorganic polyphosphate/atp-NAD kinase, domain 1"/>
    <property type="match status" value="1"/>
</dbReference>
<dbReference type="Gene3D" id="2.60.200.30">
    <property type="entry name" value="Probable inorganic polyphosphate/atp-NAD kinase, domain 2"/>
    <property type="match status" value="1"/>
</dbReference>
<dbReference type="HAMAP" id="MF_00361">
    <property type="entry name" value="NAD_kinase"/>
    <property type="match status" value="1"/>
</dbReference>
<dbReference type="InterPro" id="IPR017438">
    <property type="entry name" value="ATP-NAD_kinase_N"/>
</dbReference>
<dbReference type="InterPro" id="IPR017437">
    <property type="entry name" value="ATP-NAD_kinase_PpnK-typ_C"/>
</dbReference>
<dbReference type="InterPro" id="IPR016064">
    <property type="entry name" value="NAD/diacylglycerol_kinase_sf"/>
</dbReference>
<dbReference type="InterPro" id="IPR002504">
    <property type="entry name" value="NADK"/>
</dbReference>
<dbReference type="PANTHER" id="PTHR20275:SF43">
    <property type="entry name" value="BIFUNCTIONAL NADP PHOSPHATASE_NAD KINASE"/>
    <property type="match status" value="1"/>
</dbReference>
<dbReference type="PANTHER" id="PTHR20275">
    <property type="entry name" value="NAD KINASE"/>
    <property type="match status" value="1"/>
</dbReference>
<dbReference type="Pfam" id="PF01513">
    <property type="entry name" value="NAD_kinase"/>
    <property type="match status" value="1"/>
</dbReference>
<dbReference type="Pfam" id="PF20143">
    <property type="entry name" value="NAD_kinase_C"/>
    <property type="match status" value="1"/>
</dbReference>
<dbReference type="SUPFAM" id="SSF111331">
    <property type="entry name" value="NAD kinase/diacylglycerol kinase-like"/>
    <property type="match status" value="1"/>
</dbReference>
<gene>
    <name evidence="1" type="primary">nadK</name>
    <name type="ordered locus">M1627_0035</name>
</gene>
<organism>
    <name type="scientific">Saccharolobus islandicus (strain M.16.27)</name>
    <name type="common">Sulfolobus islandicus</name>
    <dbReference type="NCBI Taxonomy" id="427318"/>
    <lineage>
        <taxon>Archaea</taxon>
        <taxon>Thermoproteota</taxon>
        <taxon>Thermoprotei</taxon>
        <taxon>Sulfolobales</taxon>
        <taxon>Sulfolobaceae</taxon>
        <taxon>Saccharolobus</taxon>
    </lineage>
</organism>
<protein>
    <recommendedName>
        <fullName evidence="1">NAD kinase</fullName>
        <ecNumber evidence="1">2.7.1.23</ecNumber>
    </recommendedName>
    <alternativeName>
        <fullName evidence="1">ATP-dependent NAD kinase</fullName>
    </alternativeName>
</protein>
<proteinExistence type="inferred from homology"/>
<accession>C3MZX9</accession>
<name>NADK_SACI3</name>
<feature type="chain" id="PRO_1000205425" description="NAD kinase">
    <location>
        <begin position="1"/>
        <end position="249"/>
    </location>
</feature>
<feature type="active site" description="Proton acceptor" evidence="1">
    <location>
        <position position="45"/>
    </location>
</feature>
<feature type="binding site" evidence="1">
    <location>
        <begin position="45"/>
        <end position="46"/>
    </location>
    <ligand>
        <name>NAD(+)</name>
        <dbReference type="ChEBI" id="CHEBI:57540"/>
    </ligand>
</feature>
<feature type="binding site" evidence="1">
    <location>
        <position position="50"/>
    </location>
    <ligand>
        <name>NAD(+)</name>
        <dbReference type="ChEBI" id="CHEBI:57540"/>
    </ligand>
</feature>
<feature type="binding site" evidence="1">
    <location>
        <begin position="110"/>
        <end position="111"/>
    </location>
    <ligand>
        <name>NAD(+)</name>
        <dbReference type="ChEBI" id="CHEBI:57540"/>
    </ligand>
</feature>
<feature type="binding site" evidence="1">
    <location>
        <position position="138"/>
    </location>
    <ligand>
        <name>NAD(+)</name>
        <dbReference type="ChEBI" id="CHEBI:57540"/>
    </ligand>
</feature>
<feature type="binding site" evidence="1">
    <location>
        <begin position="149"/>
        <end position="154"/>
    </location>
    <ligand>
        <name>NAD(+)</name>
        <dbReference type="ChEBI" id="CHEBI:57540"/>
    </ligand>
</feature>
<sequence>MRVKIVSKPTSQLNNIIEKIKNISTKLGFEVVDKDFDYVIAVGGDGTLLRAVKQNKPVIAVKAGRRGLLMDVPVDKFEEALLRLKKGDYEEEEYMLLEMIYNDKVELGFNEVGILYDRPEAIKVGISFDTERVSVEGDGVLVSTPQGSSGWGMSATNSLLYKDLSAIEIIFVNPIFYYLRSVVIPPKPLTLRLEDKGYPQTARAVVDGEVVTLIKTNQEITVRVSQRKAKILRFFKLDLIGEVLHAYHI</sequence>
<keyword id="KW-0067">ATP-binding</keyword>
<keyword id="KW-0963">Cytoplasm</keyword>
<keyword id="KW-0418">Kinase</keyword>
<keyword id="KW-0520">NAD</keyword>
<keyword id="KW-0521">NADP</keyword>
<keyword id="KW-0547">Nucleotide-binding</keyword>
<keyword id="KW-0808">Transferase</keyword>
<comment type="function">
    <text evidence="1">Involved in the regulation of the intracellular balance of NAD and NADP, and is a key enzyme in the biosynthesis of NADP. Catalyzes specifically the phosphorylation on 2'-hydroxyl of the adenosine moiety of NAD to yield NADP.</text>
</comment>
<comment type="catalytic activity">
    <reaction evidence="1">
        <text>NAD(+) + ATP = ADP + NADP(+) + H(+)</text>
        <dbReference type="Rhea" id="RHEA:18629"/>
        <dbReference type="ChEBI" id="CHEBI:15378"/>
        <dbReference type="ChEBI" id="CHEBI:30616"/>
        <dbReference type="ChEBI" id="CHEBI:57540"/>
        <dbReference type="ChEBI" id="CHEBI:58349"/>
        <dbReference type="ChEBI" id="CHEBI:456216"/>
        <dbReference type="EC" id="2.7.1.23"/>
    </reaction>
</comment>
<comment type="cofactor">
    <cofactor evidence="1">
        <name>a divalent metal cation</name>
        <dbReference type="ChEBI" id="CHEBI:60240"/>
    </cofactor>
</comment>
<comment type="subcellular location">
    <subcellularLocation>
        <location evidence="1">Cytoplasm</location>
    </subcellularLocation>
</comment>
<comment type="similarity">
    <text evidence="1">Belongs to the NAD kinase family.</text>
</comment>
<reference key="1">
    <citation type="journal article" date="2009" name="Proc. Natl. Acad. Sci. U.S.A.">
        <title>Biogeography of the Sulfolobus islandicus pan-genome.</title>
        <authorList>
            <person name="Reno M.L."/>
            <person name="Held N.L."/>
            <person name="Fields C.J."/>
            <person name="Burke P.V."/>
            <person name="Whitaker R.J."/>
        </authorList>
    </citation>
    <scope>NUCLEOTIDE SEQUENCE [LARGE SCALE GENOMIC DNA]</scope>
    <source>
        <strain>M.16.27</strain>
    </source>
</reference>
<evidence type="ECO:0000255" key="1">
    <source>
        <dbReference type="HAMAP-Rule" id="MF_00361"/>
    </source>
</evidence>